<sequence>MASLRQIAFYGKGGIGKSTTSQNTLAALAQMGQRILIVGCDPKADSTRLILHAKAQDTILSLAADAGSVEDLELEDVMKIGYQNIRCVESGGPEPGVGCAGRGVITSINFLEEEGAYDDTDYVSYDVLGDVVCGGFAMPIRENKAQEIYIVMSGEMMAMYAANNISKGILKYANSGGVRLGGLICNERKTDKELELATALAAKLNSKLIHFVPRDNIVQHAELRRMTVLEYAPDSKQAGEYRTLANKIHENAGNGTIPTPITMDELEDLLMQHGLMPVVDESMVGKSAEVAA</sequence>
<reference key="1">
    <citation type="journal article" date="1996" name="Braz. J. Med. Biol. Res.">
        <title>Cloning and sequencing of the nitrogenase structural genes nifHDK of Herbaspirillum seropedicae.</title>
        <authorList>
            <person name="Machado I.M.P."/>
            <person name="Yates M.G."/>
            <person name="Machado H.B."/>
            <person name="Souza E.M."/>
            <person name="Pedrosa F.O."/>
        </authorList>
    </citation>
    <scope>NUCLEOTIDE SEQUENCE [GENOMIC DNA]</scope>
    <source>
        <strain>ATCC 35893 / DSM 6446 / LMG 6514 / Z78</strain>
    </source>
</reference>
<reference key="2">
    <citation type="journal article" date="1997" name="J. Bacteriol.">
        <title>Divergence in nitrogenases of Azoarcus spp., Proteobacteria of the beta subclass.</title>
        <authorList>
            <person name="Hurek T."/>
            <person name="Egener T."/>
            <person name="Reinhold-Hurek B."/>
        </authorList>
    </citation>
    <scope>NUCLEOTIDE SEQUENCE [GENOMIC DNA] OF 18-129</scope>
    <source>
        <strain>ATCC 35892 / DSM 6445 / CCUG 24564 / JCM 21448 / LMG 6513 / NCIMB 12540 / Z67</strain>
    </source>
</reference>
<protein>
    <recommendedName>
        <fullName>Nitrogenase iron protein</fullName>
        <ecNumber>1.18.6.1</ecNumber>
    </recommendedName>
    <alternativeName>
        <fullName>Nitrogenase Fe protein</fullName>
    </alternativeName>
    <alternativeName>
        <fullName>Nitrogenase component II</fullName>
    </alternativeName>
    <alternativeName>
        <fullName>Nitrogenase reductase</fullName>
    </alternativeName>
</protein>
<accession>P77873</accession>
<evidence type="ECO:0000250" key="1"/>
<evidence type="ECO:0000255" key="2"/>
<evidence type="ECO:0000305" key="3"/>
<gene>
    <name type="primary">nifH</name>
</gene>
<proteinExistence type="inferred from homology"/>
<name>NIFH_HERSE</name>
<comment type="function">
    <text evidence="1">The key enzymatic reactions in nitrogen fixation are catalyzed by the nitrogenase complex, which has 2 components: the iron protein and the molybdenum-iron protein.</text>
</comment>
<comment type="catalytic activity">
    <reaction>
        <text>N2 + 8 reduced [2Fe-2S]-[ferredoxin] + 16 ATP + 16 H2O = H2 + 8 oxidized [2Fe-2S]-[ferredoxin] + 2 NH4(+) + 16 ADP + 16 phosphate + 6 H(+)</text>
        <dbReference type="Rhea" id="RHEA:21448"/>
        <dbReference type="Rhea" id="RHEA-COMP:10000"/>
        <dbReference type="Rhea" id="RHEA-COMP:10001"/>
        <dbReference type="ChEBI" id="CHEBI:15377"/>
        <dbReference type="ChEBI" id="CHEBI:15378"/>
        <dbReference type="ChEBI" id="CHEBI:17997"/>
        <dbReference type="ChEBI" id="CHEBI:18276"/>
        <dbReference type="ChEBI" id="CHEBI:28938"/>
        <dbReference type="ChEBI" id="CHEBI:30616"/>
        <dbReference type="ChEBI" id="CHEBI:33737"/>
        <dbReference type="ChEBI" id="CHEBI:33738"/>
        <dbReference type="ChEBI" id="CHEBI:43474"/>
        <dbReference type="ChEBI" id="CHEBI:456216"/>
        <dbReference type="EC" id="1.18.6.1"/>
    </reaction>
</comment>
<comment type="cofactor">
    <cofactor evidence="1">
        <name>[4Fe-4S] cluster</name>
        <dbReference type="ChEBI" id="CHEBI:49883"/>
    </cofactor>
    <text evidence="1">Binds 1 [4Fe-4S] cluster per dimer.</text>
</comment>
<comment type="subunit">
    <text evidence="1">Homodimer.</text>
</comment>
<comment type="PTM">
    <text evidence="1">The reversible ADP-ribosylation of Arg-102 inactivates the nitrogenase reductase and regulates nitrogenase activity.</text>
</comment>
<comment type="similarity">
    <text evidence="3">Belongs to the NifH/BchL/ChlL family.</text>
</comment>
<dbReference type="EC" id="1.18.6.1"/>
<dbReference type="EMBL" id="Z54207">
    <property type="protein sequence ID" value="CAA90932.1"/>
    <property type="molecule type" value="Genomic_DNA"/>
</dbReference>
<dbReference type="EMBL" id="U97121">
    <property type="protein sequence ID" value="AAB63038.1"/>
    <property type="molecule type" value="Genomic_DNA"/>
</dbReference>
<dbReference type="RefSeq" id="WP_013234820.1">
    <property type="nucleotide sequence ID" value="NZ_JWZZ01000017.1"/>
</dbReference>
<dbReference type="SMR" id="P77873"/>
<dbReference type="GeneID" id="29391910"/>
<dbReference type="KEGG" id="hsz:ACP92_14285"/>
<dbReference type="PATRIC" id="fig|964.11.peg.2993"/>
<dbReference type="OMA" id="YGDVKCV"/>
<dbReference type="GO" id="GO:0051539">
    <property type="term" value="F:4 iron, 4 sulfur cluster binding"/>
    <property type="evidence" value="ECO:0007669"/>
    <property type="project" value="UniProtKB-KW"/>
</dbReference>
<dbReference type="GO" id="GO:0005524">
    <property type="term" value="F:ATP binding"/>
    <property type="evidence" value="ECO:0007669"/>
    <property type="project" value="UniProtKB-UniRule"/>
</dbReference>
<dbReference type="GO" id="GO:0046872">
    <property type="term" value="F:metal ion binding"/>
    <property type="evidence" value="ECO:0007669"/>
    <property type="project" value="UniProtKB-KW"/>
</dbReference>
<dbReference type="GO" id="GO:0016163">
    <property type="term" value="F:nitrogenase activity"/>
    <property type="evidence" value="ECO:0007669"/>
    <property type="project" value="UniProtKB-UniRule"/>
</dbReference>
<dbReference type="GO" id="GO:0009399">
    <property type="term" value="P:nitrogen fixation"/>
    <property type="evidence" value="ECO:0007669"/>
    <property type="project" value="UniProtKB-UniRule"/>
</dbReference>
<dbReference type="CDD" id="cd02040">
    <property type="entry name" value="NifH"/>
    <property type="match status" value="1"/>
</dbReference>
<dbReference type="FunFam" id="3.40.50.300:FF:001379">
    <property type="entry name" value="Nitrogenase iron protein 1"/>
    <property type="match status" value="1"/>
</dbReference>
<dbReference type="Gene3D" id="3.40.50.300">
    <property type="entry name" value="P-loop containing nucleotide triphosphate hydrolases"/>
    <property type="match status" value="1"/>
</dbReference>
<dbReference type="HAMAP" id="MF_00533">
    <property type="entry name" value="NifH"/>
    <property type="match status" value="1"/>
</dbReference>
<dbReference type="InterPro" id="IPR030655">
    <property type="entry name" value="NifH/chlL_CS"/>
</dbReference>
<dbReference type="InterPro" id="IPR000392">
    <property type="entry name" value="NifH/frxC"/>
</dbReference>
<dbReference type="InterPro" id="IPR005977">
    <property type="entry name" value="Nitrogenase_Fe_NifH"/>
</dbReference>
<dbReference type="InterPro" id="IPR027417">
    <property type="entry name" value="P-loop_NTPase"/>
</dbReference>
<dbReference type="NCBIfam" id="TIGR01287">
    <property type="entry name" value="nifH"/>
    <property type="match status" value="1"/>
</dbReference>
<dbReference type="PANTHER" id="PTHR42864">
    <property type="entry name" value="LIGHT-INDEPENDENT PROTOCHLOROPHYLLIDE REDUCTASE IRON-SULFUR ATP-BINDING PROTEIN"/>
    <property type="match status" value="1"/>
</dbReference>
<dbReference type="PANTHER" id="PTHR42864:SF2">
    <property type="entry name" value="LIGHT-INDEPENDENT PROTOCHLOROPHYLLIDE REDUCTASE IRON-SULFUR ATP-BINDING PROTEIN"/>
    <property type="match status" value="1"/>
</dbReference>
<dbReference type="Pfam" id="PF00142">
    <property type="entry name" value="Fer4_NifH"/>
    <property type="match status" value="1"/>
</dbReference>
<dbReference type="PIRSF" id="PIRSF000363">
    <property type="entry name" value="Nitrogenase_iron"/>
    <property type="match status" value="1"/>
</dbReference>
<dbReference type="PRINTS" id="PR00091">
    <property type="entry name" value="NITROGNASEII"/>
</dbReference>
<dbReference type="SUPFAM" id="SSF52540">
    <property type="entry name" value="P-loop containing nucleoside triphosphate hydrolases"/>
    <property type="match status" value="1"/>
</dbReference>
<dbReference type="PROSITE" id="PS00746">
    <property type="entry name" value="NIFH_FRXC_1"/>
    <property type="match status" value="1"/>
</dbReference>
<dbReference type="PROSITE" id="PS00692">
    <property type="entry name" value="NIFH_FRXC_2"/>
    <property type="match status" value="1"/>
</dbReference>
<dbReference type="PROSITE" id="PS51026">
    <property type="entry name" value="NIFH_FRXC_3"/>
    <property type="match status" value="1"/>
</dbReference>
<keyword id="KW-0004">4Fe-4S</keyword>
<keyword id="KW-0013">ADP-ribosylation</keyword>
<keyword id="KW-0067">ATP-binding</keyword>
<keyword id="KW-0408">Iron</keyword>
<keyword id="KW-0411">Iron-sulfur</keyword>
<keyword id="KW-0479">Metal-binding</keyword>
<keyword id="KW-0535">Nitrogen fixation</keyword>
<keyword id="KW-0547">Nucleotide-binding</keyword>
<keyword id="KW-0560">Oxidoreductase</keyword>
<organism>
    <name type="scientific">Herbaspirillum seropedicae</name>
    <dbReference type="NCBI Taxonomy" id="964"/>
    <lineage>
        <taxon>Bacteria</taxon>
        <taxon>Pseudomonadati</taxon>
        <taxon>Pseudomonadota</taxon>
        <taxon>Betaproteobacteria</taxon>
        <taxon>Burkholderiales</taxon>
        <taxon>Oxalobacteraceae</taxon>
        <taxon>Herbaspirillum</taxon>
    </lineage>
</organism>
<feature type="chain" id="PRO_0000139510" description="Nitrogenase iron protein">
    <location>
        <begin position="1"/>
        <end position="292"/>
    </location>
</feature>
<feature type="binding site" evidence="2">
    <location>
        <begin position="11"/>
        <end position="18"/>
    </location>
    <ligand>
        <name>ATP</name>
        <dbReference type="ChEBI" id="CHEBI:30616"/>
    </ligand>
</feature>
<feature type="binding site" evidence="1">
    <location>
        <position position="99"/>
    </location>
    <ligand>
        <name>[4Fe-4S] cluster</name>
        <dbReference type="ChEBI" id="CHEBI:49883"/>
        <note>ligand shared between dimeric partners</note>
    </ligand>
</feature>
<feature type="binding site" evidence="1">
    <location>
        <position position="133"/>
    </location>
    <ligand>
        <name>[4Fe-4S] cluster</name>
        <dbReference type="ChEBI" id="CHEBI:49883"/>
        <note>ligand shared between dimeric partners</note>
    </ligand>
</feature>
<feature type="modified residue" description="ADP-ribosylarginine; by dinitrogenase reductase ADP-ribosyltransferase" evidence="1">
    <location>
        <position position="102"/>
    </location>
</feature>